<feature type="transit peptide" description="Mitochondrion" evidence="2">
    <location>
        <begin position="1"/>
        <end status="unknown"/>
    </location>
</feature>
<feature type="chain" id="PRO_0000351056" description="Sensitive to high expression protein 9 homolog, mitochondrial">
    <location>
        <begin status="unknown"/>
        <end position="462"/>
    </location>
</feature>
<feature type="topological domain" description="Mitochondrial matrix" evidence="2">
    <location>
        <begin status="unknown"/>
        <end position="309"/>
    </location>
</feature>
<feature type="transmembrane region" description="Helical" evidence="2">
    <location>
        <begin position="310"/>
        <end position="330"/>
    </location>
</feature>
<feature type="topological domain" description="Mitochondrial intermembrane" evidence="2">
    <location>
        <begin position="331"/>
        <end position="438"/>
    </location>
</feature>
<feature type="transmembrane region" description="Helical" evidence="2">
    <location>
        <begin position="439"/>
        <end position="459"/>
    </location>
</feature>
<feature type="topological domain" description="Mitochondrial matrix" evidence="2">
    <location>
        <begin position="460"/>
        <end position="462"/>
    </location>
</feature>
<feature type="region of interest" description="Disordered" evidence="3">
    <location>
        <begin position="93"/>
        <end position="134"/>
    </location>
</feature>
<feature type="coiled-coil region" evidence="2">
    <location>
        <begin position="188"/>
        <end position="222"/>
    </location>
</feature>
<feature type="compositionally biased region" description="Basic and acidic residues" evidence="3">
    <location>
        <begin position="93"/>
        <end position="110"/>
    </location>
</feature>
<name>SHE9_DEBHA</name>
<keyword id="KW-0175">Coiled coil</keyword>
<keyword id="KW-0472">Membrane</keyword>
<keyword id="KW-0496">Mitochondrion</keyword>
<keyword id="KW-0999">Mitochondrion inner membrane</keyword>
<keyword id="KW-1185">Reference proteome</keyword>
<keyword id="KW-0809">Transit peptide</keyword>
<keyword id="KW-0812">Transmembrane</keyword>
<keyword id="KW-1133">Transmembrane helix</keyword>
<organism>
    <name type="scientific">Debaryomyces hansenii (strain ATCC 36239 / CBS 767 / BCRC 21394 / JCM 1990 / NBRC 0083 / IGC 2968)</name>
    <name type="common">Yeast</name>
    <name type="synonym">Torulaspora hansenii</name>
    <dbReference type="NCBI Taxonomy" id="284592"/>
    <lineage>
        <taxon>Eukaryota</taxon>
        <taxon>Fungi</taxon>
        <taxon>Dikarya</taxon>
        <taxon>Ascomycota</taxon>
        <taxon>Saccharomycotina</taxon>
        <taxon>Pichiomycetes</taxon>
        <taxon>Debaryomycetaceae</taxon>
        <taxon>Debaryomyces</taxon>
    </lineage>
</organism>
<sequence>MNVSTYNIRPIYRSHRLIRSRSCFCILNPLAVRFYSSKNFSSSNNPIANSNEKSSHHDEKLREIIETTNFGSELRKKKEMHDKKLHEQKAYEKYEKEAEGKETPQEKGQEEDSVSNSDKSTPEEEVKANDGSIIASEISEDIQREIGNLPSQKETRRYQLSKKLEEYLDSLQDTIFTATRALNDVTGYSSIEQLKKSINDLEVQLKNEKDNVKKCKDLYSQAILRRSLSQREINELLTRKHNWSPDDLERFTTLYRNDHVNEQEESNTHNALNDAESKVDAIQLKLTQSILTRYHEEQIWSDKIRRASTWGTWILMGINLFLFILATFLVEPWKRKRLVGSFEDKVKQAIFEMSEVQEGKWDQMILQQKESAAQQSVSTLKSWWFNSDDDSEPNKSSVYPMILTPVDNSWQGLKTTIRSHYNALRSSTISTLQFEKYEFAWFATTITILGCALGSILTVYFK</sequence>
<accession>Q6BJ94</accession>
<gene>
    <name type="primary">SHE9</name>
    <name type="ordered locus">DEHA2G04158g</name>
</gene>
<proteinExistence type="inferred from homology"/>
<evidence type="ECO:0000250" key="1"/>
<evidence type="ECO:0000255" key="2"/>
<evidence type="ECO:0000256" key="3">
    <source>
        <dbReference type="SAM" id="MobiDB-lite"/>
    </source>
</evidence>
<evidence type="ECO:0000305" key="4"/>
<reference key="1">
    <citation type="journal article" date="2004" name="Nature">
        <title>Genome evolution in yeasts.</title>
        <authorList>
            <person name="Dujon B."/>
            <person name="Sherman D."/>
            <person name="Fischer G."/>
            <person name="Durrens P."/>
            <person name="Casaregola S."/>
            <person name="Lafontaine I."/>
            <person name="de Montigny J."/>
            <person name="Marck C."/>
            <person name="Neuveglise C."/>
            <person name="Talla E."/>
            <person name="Goffard N."/>
            <person name="Frangeul L."/>
            <person name="Aigle M."/>
            <person name="Anthouard V."/>
            <person name="Babour A."/>
            <person name="Barbe V."/>
            <person name="Barnay S."/>
            <person name="Blanchin S."/>
            <person name="Beckerich J.-M."/>
            <person name="Beyne E."/>
            <person name="Bleykasten C."/>
            <person name="Boisrame A."/>
            <person name="Boyer J."/>
            <person name="Cattolico L."/>
            <person name="Confanioleri F."/>
            <person name="de Daruvar A."/>
            <person name="Despons L."/>
            <person name="Fabre E."/>
            <person name="Fairhead C."/>
            <person name="Ferry-Dumazet H."/>
            <person name="Groppi A."/>
            <person name="Hantraye F."/>
            <person name="Hennequin C."/>
            <person name="Jauniaux N."/>
            <person name="Joyet P."/>
            <person name="Kachouri R."/>
            <person name="Kerrest A."/>
            <person name="Koszul R."/>
            <person name="Lemaire M."/>
            <person name="Lesur I."/>
            <person name="Ma L."/>
            <person name="Muller H."/>
            <person name="Nicaud J.-M."/>
            <person name="Nikolski M."/>
            <person name="Oztas S."/>
            <person name="Ozier-Kalogeropoulos O."/>
            <person name="Pellenz S."/>
            <person name="Potier S."/>
            <person name="Richard G.-F."/>
            <person name="Straub M.-L."/>
            <person name="Suleau A."/>
            <person name="Swennen D."/>
            <person name="Tekaia F."/>
            <person name="Wesolowski-Louvel M."/>
            <person name="Westhof E."/>
            <person name="Wirth B."/>
            <person name="Zeniou-Meyer M."/>
            <person name="Zivanovic Y."/>
            <person name="Bolotin-Fukuhara M."/>
            <person name="Thierry A."/>
            <person name="Bouchier C."/>
            <person name="Caudron B."/>
            <person name="Scarpelli C."/>
            <person name="Gaillardin C."/>
            <person name="Weissenbach J."/>
            <person name="Wincker P."/>
            <person name="Souciet J.-L."/>
        </authorList>
    </citation>
    <scope>NUCLEOTIDE SEQUENCE [LARGE SCALE GENOMIC DNA]</scope>
    <source>
        <strain>ATCC 36239 / CBS 767 / BCRC 21394 / JCM 1990 / NBRC 0083 / IGC 2968</strain>
    </source>
</reference>
<protein>
    <recommendedName>
        <fullName>Sensitive to high expression protein 9 homolog, mitochondrial</fullName>
    </recommendedName>
</protein>
<comment type="function">
    <text evidence="1">Required for the maintenance of the structure of the mitochondrial inner membrane. Involved in mitochondrial morphology. Causes growth arrest when highly overexpressed (By similarity).</text>
</comment>
<comment type="subunit">
    <text evidence="1">Homooligomer.</text>
</comment>
<comment type="subcellular location">
    <subcellularLocation>
        <location evidence="1">Mitochondrion inner membrane</location>
        <topology evidence="1">Multi-pass membrane protein</topology>
    </subcellularLocation>
</comment>
<comment type="similarity">
    <text evidence="4">Belongs to the SHE9 family.</text>
</comment>
<dbReference type="EMBL" id="CR382139">
    <property type="protein sequence ID" value="CAG90180.2"/>
    <property type="molecule type" value="Genomic_DNA"/>
</dbReference>
<dbReference type="RefSeq" id="XP_461727.2">
    <property type="nucleotide sequence ID" value="XM_461727.1"/>
</dbReference>
<dbReference type="SMR" id="Q6BJ94"/>
<dbReference type="FunCoup" id="Q6BJ94">
    <property type="interactions" value="52"/>
</dbReference>
<dbReference type="STRING" id="284592.Q6BJ94"/>
<dbReference type="GeneID" id="2904600"/>
<dbReference type="KEGG" id="dha:DEHA2G04158g"/>
<dbReference type="VEuPathDB" id="FungiDB:DEHA2G04158g"/>
<dbReference type="eggNOG" id="ENOG502QQ1E">
    <property type="taxonomic scope" value="Eukaryota"/>
</dbReference>
<dbReference type="HOGENOM" id="CLU_025632_5_0_1"/>
<dbReference type="InParanoid" id="Q6BJ94"/>
<dbReference type="OMA" id="YRNDHEN"/>
<dbReference type="OrthoDB" id="5595506at2759"/>
<dbReference type="Proteomes" id="UP000000599">
    <property type="component" value="Chromosome G"/>
</dbReference>
<dbReference type="GO" id="GO:0005743">
    <property type="term" value="C:mitochondrial inner membrane"/>
    <property type="evidence" value="ECO:0007669"/>
    <property type="project" value="UniProtKB-SubCell"/>
</dbReference>
<dbReference type="GO" id="GO:0007007">
    <property type="term" value="P:inner mitochondrial membrane organization"/>
    <property type="evidence" value="ECO:0007669"/>
    <property type="project" value="TreeGrafter"/>
</dbReference>
<dbReference type="InterPro" id="IPR008839">
    <property type="entry name" value="MDM33_fungi"/>
</dbReference>
<dbReference type="PANTHER" id="PTHR31961">
    <property type="entry name" value="SENSITIVE TO HIGH EXPRESSION PROTEIN 9, MITOCHONDRIAL"/>
    <property type="match status" value="1"/>
</dbReference>
<dbReference type="PANTHER" id="PTHR31961:SF3">
    <property type="entry name" value="SENSITIVE TO HIGH EXPRESSION PROTEIN 9, MITOCHONDRIAL"/>
    <property type="match status" value="1"/>
</dbReference>
<dbReference type="Pfam" id="PF05546">
    <property type="entry name" value="She9_MDM33"/>
    <property type="match status" value="1"/>
</dbReference>